<gene>
    <name evidence="4" type="primary">CYPADH</name>
    <name evidence="4" type="synonym">ADH2</name>
    <name evidence="5" type="ORF">Caros007480</name>
</gene>
<comment type="function">
    <text evidence="3">May be a positive catalyzer of strictosidine production by assisting secologanin biosynthesis, thus being involved in monoterpene indole alkaloids accumulation.</text>
</comment>
<comment type="cofactor">
    <cofactor evidence="2">
        <name>Zn(2+)</name>
        <dbReference type="ChEBI" id="CHEBI:29105"/>
    </cofactor>
    <text evidence="2">Binds 2 Zn(2+) ions per subunit.</text>
</comment>
<comment type="pathway">
    <text evidence="3">Alkaloid biosynthesis.</text>
</comment>
<comment type="subunit">
    <text evidence="2">Homodimer.</text>
</comment>
<comment type="biotechnology">
    <text evidence="3">Promotes strictosidine production by assisting secologanin biosynthesis when expressed in a S.cerevisiae host optimized for the biosynthesis of monoterpene indole alkaloids.</text>
</comment>
<comment type="similarity">
    <text evidence="5">Belongs to the zinc-containing alcohol dehydrogenase family. Class-III subfamily.</text>
</comment>
<comment type="online information" name="ORCAE database">
    <link uri="https://orcae.psb.ugent.be/taxa/catro/regular/v1/"/>
</comment>
<accession>A0A0C5DM37</accession>
<name>CYADH_CATRO</name>
<evidence type="ECO:0000250" key="1">
    <source>
        <dbReference type="UniProtKB" id="P00327"/>
    </source>
</evidence>
<evidence type="ECO:0000250" key="2">
    <source>
        <dbReference type="UniProtKB" id="P06525"/>
    </source>
</evidence>
<evidence type="ECO:0000269" key="3">
    <source>
    </source>
</evidence>
<evidence type="ECO:0000303" key="4">
    <source>
    </source>
</evidence>
<evidence type="ECO:0000305" key="5"/>
<evidence type="ECO:0000305" key="6">
    <source>
    </source>
</evidence>
<organism>
    <name type="scientific">Catharanthus roseus</name>
    <name type="common">Madagascar periwinkle</name>
    <name type="synonym">Vinca rosea</name>
    <dbReference type="NCBI Taxonomy" id="4058"/>
    <lineage>
        <taxon>Eukaryota</taxon>
        <taxon>Viridiplantae</taxon>
        <taxon>Streptophyta</taxon>
        <taxon>Embryophyta</taxon>
        <taxon>Tracheophyta</taxon>
        <taxon>Spermatophyta</taxon>
        <taxon>Magnoliopsida</taxon>
        <taxon>eudicotyledons</taxon>
        <taxon>Gunneridae</taxon>
        <taxon>Pentapetalae</taxon>
        <taxon>asterids</taxon>
        <taxon>lamiids</taxon>
        <taxon>Gentianales</taxon>
        <taxon>Apocynaceae</taxon>
        <taxon>Rauvolfioideae</taxon>
        <taxon>Vinceae</taxon>
        <taxon>Catharanthinae</taxon>
        <taxon>Catharanthus</taxon>
    </lineage>
</organism>
<sequence>MQIITCKAVVCWAAGEPPVVEEILVEPPRSGEVRIKILFASLCHTDVLACKGFPTPMFPRVLGHEGVGVVECVGEGVSELREGDVVIPTYLGECGECENCESGRTNLCRTYPLQAFTGLMPDGSSRMSSAKGGEMLYQFLSCSTWSEYTVIDANYAVKIDSRIPLPHASFLSCGFTTGFGATWKEAKLQEGSSTVAVLGLGAVGLGAVEGARVQGVTQIIGIDINDNKREKGEAFGMTHFINPKKDNNKSISELVKELTKGQGVDVCFECTGVPDLVNEALESTKIGTGNMIMLGAGTQKSMTINFVSLLGCRTFKYSVFGGVKVQSDLPLIIQKCLNKEIQKIEQLLTHQVQLEDINRAFELLKEPDCVKVLITL</sequence>
<keyword id="KW-0017">Alkaloid metabolism</keyword>
<keyword id="KW-0479">Metal-binding</keyword>
<keyword id="KW-0520">NAD</keyword>
<keyword id="KW-0560">Oxidoreductase</keyword>
<keyword id="KW-0862">Zinc</keyword>
<dbReference type="EC" id="1.1.1.-" evidence="2"/>
<dbReference type="EMBL" id="KP411012">
    <property type="protein sequence ID" value="AJO70764.1"/>
    <property type="molecule type" value="mRNA"/>
</dbReference>
<dbReference type="SMR" id="A0A0C5DM37"/>
<dbReference type="OrthoDB" id="417550at2759"/>
<dbReference type="GO" id="GO:0005829">
    <property type="term" value="C:cytosol"/>
    <property type="evidence" value="ECO:0007669"/>
    <property type="project" value="TreeGrafter"/>
</dbReference>
<dbReference type="GO" id="GO:0051903">
    <property type="term" value="F:S-(hydroxymethyl)glutathione dehydrogenase [NAD(P)+] activity"/>
    <property type="evidence" value="ECO:0007669"/>
    <property type="project" value="TreeGrafter"/>
</dbReference>
<dbReference type="GO" id="GO:0008270">
    <property type="term" value="F:zinc ion binding"/>
    <property type="evidence" value="ECO:0007669"/>
    <property type="project" value="InterPro"/>
</dbReference>
<dbReference type="GO" id="GO:0009820">
    <property type="term" value="P:alkaloid metabolic process"/>
    <property type="evidence" value="ECO:0000314"/>
    <property type="project" value="UniProtKB"/>
</dbReference>
<dbReference type="GO" id="GO:0046294">
    <property type="term" value="P:formaldehyde catabolic process"/>
    <property type="evidence" value="ECO:0007669"/>
    <property type="project" value="TreeGrafter"/>
</dbReference>
<dbReference type="CDD" id="cd08277">
    <property type="entry name" value="liver_alcohol_DH_like"/>
    <property type="match status" value="1"/>
</dbReference>
<dbReference type="FunFam" id="3.90.180.10:FF:000007">
    <property type="entry name" value="Alcohol dehydrogenase 6"/>
    <property type="match status" value="1"/>
</dbReference>
<dbReference type="FunFam" id="3.40.50.720:FF:000003">
    <property type="entry name" value="S-(hydroxymethyl)glutathione dehydrogenase"/>
    <property type="match status" value="1"/>
</dbReference>
<dbReference type="Gene3D" id="3.90.180.10">
    <property type="entry name" value="Medium-chain alcohol dehydrogenases, catalytic domain"/>
    <property type="match status" value="1"/>
</dbReference>
<dbReference type="Gene3D" id="3.40.50.720">
    <property type="entry name" value="NAD(P)-binding Rossmann-like Domain"/>
    <property type="match status" value="1"/>
</dbReference>
<dbReference type="InterPro" id="IPR013149">
    <property type="entry name" value="ADH-like_C"/>
</dbReference>
<dbReference type="InterPro" id="IPR013154">
    <property type="entry name" value="ADH-like_N"/>
</dbReference>
<dbReference type="InterPro" id="IPR002328">
    <property type="entry name" value="ADH_Zn_CS"/>
</dbReference>
<dbReference type="InterPro" id="IPR011032">
    <property type="entry name" value="GroES-like_sf"/>
</dbReference>
<dbReference type="InterPro" id="IPR036291">
    <property type="entry name" value="NAD(P)-bd_dom_sf"/>
</dbReference>
<dbReference type="InterPro" id="IPR020843">
    <property type="entry name" value="PKS_ER"/>
</dbReference>
<dbReference type="PANTHER" id="PTHR43880">
    <property type="entry name" value="ALCOHOL DEHYDROGENASE"/>
    <property type="match status" value="1"/>
</dbReference>
<dbReference type="PANTHER" id="PTHR43880:SF38">
    <property type="entry name" value="ALCOHOL DEHYDROGENASE-RELATED"/>
    <property type="match status" value="1"/>
</dbReference>
<dbReference type="Pfam" id="PF08240">
    <property type="entry name" value="ADH_N"/>
    <property type="match status" value="1"/>
</dbReference>
<dbReference type="Pfam" id="PF00107">
    <property type="entry name" value="ADH_zinc_N"/>
    <property type="match status" value="1"/>
</dbReference>
<dbReference type="SMART" id="SM00829">
    <property type="entry name" value="PKS_ER"/>
    <property type="match status" value="1"/>
</dbReference>
<dbReference type="SUPFAM" id="SSF50129">
    <property type="entry name" value="GroES-like"/>
    <property type="match status" value="1"/>
</dbReference>
<dbReference type="SUPFAM" id="SSF51735">
    <property type="entry name" value="NAD(P)-binding Rossmann-fold domains"/>
    <property type="match status" value="1"/>
</dbReference>
<dbReference type="PROSITE" id="PS00059">
    <property type="entry name" value="ADH_ZINC"/>
    <property type="match status" value="1"/>
</dbReference>
<protein>
    <recommendedName>
        <fullName evidence="6">CYP enzymes assisting alcohol dehydrogenase</fullName>
        <shortName evidence="4">CrCYPADH</shortName>
        <ecNumber evidence="2">1.1.1.-</ecNumber>
    </recommendedName>
    <alternativeName>
        <fullName evidence="4">Alcohol dehydrogenase 2</fullName>
    </alternativeName>
</protein>
<reference key="1">
    <citation type="journal article" date="2015" name="Proc. Natl. Acad. Sci. U.S.A.">
        <title>De novo production of the plant-derived alkaloid strictosidine in yeast.</title>
        <authorList>
            <person name="Brown S."/>
            <person name="Clastre M."/>
            <person name="Courdavault V."/>
            <person name="O'Connor S.E."/>
        </authorList>
    </citation>
    <scope>NUCLEOTIDE SEQUENCE [MRNA]</scope>
    <scope>FUNCTION</scope>
    <scope>PATHWAY</scope>
    <scope>BIOTECHNOLOGY</scope>
</reference>
<feature type="chain" id="PRO_0000446417" description="CYP enzymes assisting alcohol dehydrogenase">
    <location>
        <begin position="1"/>
        <end position="376"/>
    </location>
</feature>
<feature type="binding site" evidence="2">
    <location>
        <position position="43"/>
    </location>
    <ligand>
        <name>Zn(2+)</name>
        <dbReference type="ChEBI" id="CHEBI:29105"/>
        <label>1</label>
        <note>catalytic</note>
    </ligand>
</feature>
<feature type="binding site" evidence="2">
    <location>
        <position position="45"/>
    </location>
    <ligand>
        <name>NAD(+)</name>
        <dbReference type="ChEBI" id="CHEBI:57540"/>
    </ligand>
</feature>
<feature type="binding site" evidence="2">
    <location>
        <position position="45"/>
    </location>
    <ligand>
        <name>substrate</name>
    </ligand>
</feature>
<feature type="binding site" evidence="2">
    <location>
        <position position="45"/>
    </location>
    <ligand>
        <name>Zn(2+)</name>
        <dbReference type="ChEBI" id="CHEBI:29105"/>
        <label>1</label>
        <note>catalytic</note>
    </ligand>
</feature>
<feature type="binding site" evidence="1">
    <location>
        <position position="64"/>
    </location>
    <ligand>
        <name>substrate</name>
    </ligand>
</feature>
<feature type="binding site" evidence="2">
    <location>
        <position position="64"/>
    </location>
    <ligand>
        <name>Zn(2+)</name>
        <dbReference type="ChEBI" id="CHEBI:29105"/>
        <label>1</label>
        <note>catalytic</note>
    </ligand>
</feature>
<feature type="binding site" evidence="2">
    <location>
        <position position="94"/>
    </location>
    <ligand>
        <name>Zn(2+)</name>
        <dbReference type="ChEBI" id="CHEBI:29105"/>
        <label>2</label>
    </ligand>
</feature>
<feature type="binding site" evidence="2">
    <location>
        <position position="97"/>
    </location>
    <ligand>
        <name>Zn(2+)</name>
        <dbReference type="ChEBI" id="CHEBI:29105"/>
        <label>2</label>
    </ligand>
</feature>
<feature type="binding site" evidence="2">
    <location>
        <position position="100"/>
    </location>
    <ligand>
        <name>Zn(2+)</name>
        <dbReference type="ChEBI" id="CHEBI:29105"/>
        <label>2</label>
    </ligand>
</feature>
<feature type="binding site" evidence="2">
    <location>
        <position position="108"/>
    </location>
    <ligand>
        <name>Zn(2+)</name>
        <dbReference type="ChEBI" id="CHEBI:29105"/>
        <label>2</label>
    </ligand>
</feature>
<feature type="binding site" evidence="2">
    <location>
        <position position="173"/>
    </location>
    <ligand>
        <name>Zn(2+)</name>
        <dbReference type="ChEBI" id="CHEBI:29105"/>
        <label>1</label>
        <note>catalytic</note>
    </ligand>
</feature>
<feature type="binding site" evidence="2">
    <location>
        <begin position="199"/>
        <end position="204"/>
    </location>
    <ligand>
        <name>NAD(+)</name>
        <dbReference type="ChEBI" id="CHEBI:57540"/>
    </ligand>
</feature>
<feature type="binding site" evidence="2">
    <location>
        <position position="223"/>
    </location>
    <ligand>
        <name>NAD(+)</name>
        <dbReference type="ChEBI" id="CHEBI:57540"/>
    </ligand>
</feature>
<feature type="binding site" evidence="2">
    <location>
        <position position="228"/>
    </location>
    <ligand>
        <name>NAD(+)</name>
        <dbReference type="ChEBI" id="CHEBI:57540"/>
    </ligand>
</feature>
<feature type="binding site" evidence="1">
    <location>
        <begin position="294"/>
        <end position="296"/>
    </location>
    <ligand>
        <name>NAD(+)</name>
        <dbReference type="ChEBI" id="CHEBI:57540"/>
    </ligand>
</feature>
<feature type="binding site" evidence="2">
    <location>
        <position position="320"/>
    </location>
    <ligand>
        <name>NAD(+)</name>
        <dbReference type="ChEBI" id="CHEBI:57540"/>
    </ligand>
</feature>
<feature type="binding site" evidence="2">
    <location>
        <position position="371"/>
    </location>
    <ligand>
        <name>NAD(+)</name>
        <dbReference type="ChEBI" id="CHEBI:57540"/>
    </ligand>
</feature>
<proteinExistence type="evidence at protein level"/>